<proteinExistence type="evidence at protein level"/>
<accession>P0DRJ6</accession>
<evidence type="ECO:0000269" key="1">
    <source>
    </source>
</evidence>
<evidence type="ECO:0000303" key="2">
    <source>
    </source>
</evidence>
<evidence type="ECO:0000305" key="3"/>
<evidence type="ECO:0000305" key="4">
    <source>
    </source>
</evidence>
<name>BPP_CRODC</name>
<organism>
    <name type="scientific">Crotalus durissus cascavella</name>
    <name type="common">Northeastern Brazilian rattlesnake</name>
    <dbReference type="NCBI Taxonomy" id="184540"/>
    <lineage>
        <taxon>Eukaryota</taxon>
        <taxon>Metazoa</taxon>
        <taxon>Chordata</taxon>
        <taxon>Craniata</taxon>
        <taxon>Vertebrata</taxon>
        <taxon>Euteleostomi</taxon>
        <taxon>Lepidosauria</taxon>
        <taxon>Squamata</taxon>
        <taxon>Bifurcata</taxon>
        <taxon>Unidentata</taxon>
        <taxon>Episquamata</taxon>
        <taxon>Toxicofera</taxon>
        <taxon>Serpentes</taxon>
        <taxon>Colubroidea</taxon>
        <taxon>Viperidae</taxon>
        <taxon>Crotalinae</taxon>
        <taxon>Crotalus</taxon>
    </lineage>
</organism>
<feature type="peptide" id="PRO_0000462521" description="Bradykinin-potentiating peptide Cdc" evidence="1">
    <location>
        <begin position="1"/>
        <end position="11"/>
    </location>
</feature>
<protein>
    <recommendedName>
        <fullName evidence="2 3">Bradykinin-potentiating peptide Cdc</fullName>
        <shortName evidence="2">BPP-Cdc</shortName>
    </recommendedName>
</protein>
<sequence length="11" mass="1194">PNLPNYLGIPP</sequence>
<comment type="function">
    <text evidence="1">Bradykinin-potentiating peptide that highly increases hypotensive effect of bradykinin (BK), and decrease effects of angiotensin-1, probably by inhibiting the activity of the angiotensin-converting enzyme (ACE). On the guinea pig ileum, increases BK-induced contractions and decreases angiotensin-1-induced contractions. In vivo, when tested on hypertensive rats, increases hypotensive response to BK, and decreases the vasopressor effect of angiotensin-1. In all the activities tested, its effects are similar or higher to those of BPP-9a, and the duration of its effects is longer.</text>
</comment>
<comment type="subcellular location">
    <subcellularLocation>
        <location evidence="1">Secreted</location>
    </subcellularLocation>
</comment>
<comment type="tissue specificity">
    <text evidence="4">Expressed by the venom gland.</text>
</comment>
<comment type="mass spectrometry" mass="1194.49" method="Electrospray" evidence="1"/>
<comment type="similarity">
    <text evidence="3">Belongs to the bradykinin-potentiating peptide family.</text>
</comment>
<reference key="1">
    <citation type="journal article" date="2014" name="Toxicon">
        <title>A new structurally atypical bradykinin-potentiating peptide isolated from Crotalus durissus cascavella venom (South American rattlesnake).</title>
        <authorList>
            <person name="Lopes D.M."/>
            <person name="Junior N.E."/>
            <person name="Costa P.P."/>
            <person name="Martins P.L."/>
            <person name="Santos C.F."/>
            <person name="Carvalho E.D."/>
            <person name="Carvalho M.D."/>
            <person name="Pimenta D.C."/>
            <person name="Cardi B.A."/>
            <person name="Fonteles M.C."/>
            <person name="Nascimento N.R."/>
            <person name="Carvalho K.M."/>
        </authorList>
    </citation>
    <scope>PROTEIN SEQUENCE</scope>
    <scope>FUNCTION</scope>
    <scope>BIOASSAY</scope>
    <scope>SUBCELLULAR LOCATION</scope>
    <scope>MASS SPECTROMETRY</scope>
    <source>
        <tissue>Venom</tissue>
    </source>
</reference>
<keyword id="KW-0903">Direct protein sequencing</keyword>
<keyword id="KW-0382">Hypotensive agent</keyword>
<keyword id="KW-0964">Secreted</keyword>